<accession>C3PFA7</accession>
<comment type="function">
    <text evidence="1">Catalyzes the reversible conversion of 2-phosphoglycerate (2-PG) into phosphoenolpyruvate (PEP). It is essential for the degradation of carbohydrates via glycolysis.</text>
</comment>
<comment type="catalytic activity">
    <reaction evidence="1">
        <text>(2R)-2-phosphoglycerate = phosphoenolpyruvate + H2O</text>
        <dbReference type="Rhea" id="RHEA:10164"/>
        <dbReference type="ChEBI" id="CHEBI:15377"/>
        <dbReference type="ChEBI" id="CHEBI:58289"/>
        <dbReference type="ChEBI" id="CHEBI:58702"/>
        <dbReference type="EC" id="4.2.1.11"/>
    </reaction>
</comment>
<comment type="cofactor">
    <cofactor evidence="1">
        <name>Mg(2+)</name>
        <dbReference type="ChEBI" id="CHEBI:18420"/>
    </cofactor>
    <text evidence="1">Binds a second Mg(2+) ion via substrate during catalysis.</text>
</comment>
<comment type="pathway">
    <text evidence="1">Carbohydrate degradation; glycolysis; pyruvate from D-glyceraldehyde 3-phosphate: step 4/5.</text>
</comment>
<comment type="subcellular location">
    <subcellularLocation>
        <location evidence="1">Cytoplasm</location>
    </subcellularLocation>
    <subcellularLocation>
        <location evidence="1">Secreted</location>
    </subcellularLocation>
    <subcellularLocation>
        <location evidence="1">Cell surface</location>
    </subcellularLocation>
    <text evidence="1">Fractions of enolase are present in both the cytoplasm and on the cell surface.</text>
</comment>
<comment type="similarity">
    <text evidence="1">Belongs to the enolase family.</text>
</comment>
<name>ENO_CORA7</name>
<reference key="1">
    <citation type="journal article" date="2010" name="BMC Genomics">
        <title>Complete genome sequence and lifestyle of black-pigmented Corynebacterium aurimucosum ATCC 700975 (formerly C. nigricans CN-1) isolated from a vaginal swab of a woman with spontaneous abortion.</title>
        <authorList>
            <person name="Trost E."/>
            <person name="Gotker S."/>
            <person name="Schneider J."/>
            <person name="Schneiker-Bekel S."/>
            <person name="Szczepanowski R."/>
            <person name="Tilker A."/>
            <person name="Viehoever P."/>
            <person name="Arnold W."/>
            <person name="Bekel T."/>
            <person name="Blom J."/>
            <person name="Gartemann K.H."/>
            <person name="Linke B."/>
            <person name="Goesmann A."/>
            <person name="Puhler A."/>
            <person name="Shukla S.K."/>
            <person name="Tauch A."/>
        </authorList>
    </citation>
    <scope>NUCLEOTIDE SEQUENCE [LARGE SCALE GENOMIC DNA]</scope>
    <source>
        <strain>ATCC 700975 / DSM 44827 / CIP 107346 / CN-1</strain>
    </source>
</reference>
<protein>
    <recommendedName>
        <fullName evidence="1">Enolase</fullName>
        <ecNumber evidence="1">4.2.1.11</ecNumber>
    </recommendedName>
    <alternativeName>
        <fullName evidence="1">2-phospho-D-glycerate hydro-lyase</fullName>
    </alternativeName>
    <alternativeName>
        <fullName evidence="1">2-phosphoglycerate dehydratase</fullName>
    </alternativeName>
</protein>
<organism>
    <name type="scientific">Corynebacterium aurimucosum (strain ATCC 700975 / DSM 44827 / CIP 107346 / CN-1)</name>
    <name type="common">Corynebacterium nigricans</name>
    <dbReference type="NCBI Taxonomy" id="548476"/>
    <lineage>
        <taxon>Bacteria</taxon>
        <taxon>Bacillati</taxon>
        <taxon>Actinomycetota</taxon>
        <taxon>Actinomycetes</taxon>
        <taxon>Mycobacteriales</taxon>
        <taxon>Corynebacteriaceae</taxon>
        <taxon>Corynebacterium</taxon>
    </lineage>
</organism>
<dbReference type="EC" id="4.2.1.11" evidence="1"/>
<dbReference type="EMBL" id="CP001601">
    <property type="protein sequence ID" value="ACP32511.1"/>
    <property type="molecule type" value="Genomic_DNA"/>
</dbReference>
<dbReference type="RefSeq" id="WP_010187392.1">
    <property type="nucleotide sequence ID" value="NC_012590.1"/>
</dbReference>
<dbReference type="SMR" id="C3PFA7"/>
<dbReference type="STRING" id="548476.cauri_0914"/>
<dbReference type="GeneID" id="31923539"/>
<dbReference type="KEGG" id="car:cauri_0914"/>
<dbReference type="eggNOG" id="COG0148">
    <property type="taxonomic scope" value="Bacteria"/>
</dbReference>
<dbReference type="HOGENOM" id="CLU_031223_2_1_11"/>
<dbReference type="OrthoDB" id="9804716at2"/>
<dbReference type="UniPathway" id="UPA00109">
    <property type="reaction ID" value="UER00187"/>
</dbReference>
<dbReference type="Proteomes" id="UP000002077">
    <property type="component" value="Chromosome"/>
</dbReference>
<dbReference type="GO" id="GO:0009986">
    <property type="term" value="C:cell surface"/>
    <property type="evidence" value="ECO:0007669"/>
    <property type="project" value="UniProtKB-SubCell"/>
</dbReference>
<dbReference type="GO" id="GO:0005576">
    <property type="term" value="C:extracellular region"/>
    <property type="evidence" value="ECO:0007669"/>
    <property type="project" value="UniProtKB-SubCell"/>
</dbReference>
<dbReference type="GO" id="GO:0000015">
    <property type="term" value="C:phosphopyruvate hydratase complex"/>
    <property type="evidence" value="ECO:0007669"/>
    <property type="project" value="InterPro"/>
</dbReference>
<dbReference type="GO" id="GO:0000287">
    <property type="term" value="F:magnesium ion binding"/>
    <property type="evidence" value="ECO:0007669"/>
    <property type="project" value="UniProtKB-UniRule"/>
</dbReference>
<dbReference type="GO" id="GO:0004634">
    <property type="term" value="F:phosphopyruvate hydratase activity"/>
    <property type="evidence" value="ECO:0007669"/>
    <property type="project" value="UniProtKB-UniRule"/>
</dbReference>
<dbReference type="GO" id="GO:0006096">
    <property type="term" value="P:glycolytic process"/>
    <property type="evidence" value="ECO:0007669"/>
    <property type="project" value="UniProtKB-UniRule"/>
</dbReference>
<dbReference type="CDD" id="cd03313">
    <property type="entry name" value="enolase"/>
    <property type="match status" value="1"/>
</dbReference>
<dbReference type="FunFam" id="3.20.20.120:FF:000001">
    <property type="entry name" value="Enolase"/>
    <property type="match status" value="1"/>
</dbReference>
<dbReference type="FunFam" id="3.30.390.10:FF:000001">
    <property type="entry name" value="Enolase"/>
    <property type="match status" value="1"/>
</dbReference>
<dbReference type="Gene3D" id="3.20.20.120">
    <property type="entry name" value="Enolase-like C-terminal domain"/>
    <property type="match status" value="1"/>
</dbReference>
<dbReference type="Gene3D" id="3.30.390.10">
    <property type="entry name" value="Enolase-like, N-terminal domain"/>
    <property type="match status" value="1"/>
</dbReference>
<dbReference type="HAMAP" id="MF_00318">
    <property type="entry name" value="Enolase"/>
    <property type="match status" value="1"/>
</dbReference>
<dbReference type="InterPro" id="IPR000941">
    <property type="entry name" value="Enolase"/>
</dbReference>
<dbReference type="InterPro" id="IPR036849">
    <property type="entry name" value="Enolase-like_C_sf"/>
</dbReference>
<dbReference type="InterPro" id="IPR029017">
    <property type="entry name" value="Enolase-like_N"/>
</dbReference>
<dbReference type="InterPro" id="IPR020810">
    <property type="entry name" value="Enolase_C"/>
</dbReference>
<dbReference type="InterPro" id="IPR020809">
    <property type="entry name" value="Enolase_CS"/>
</dbReference>
<dbReference type="InterPro" id="IPR020811">
    <property type="entry name" value="Enolase_N"/>
</dbReference>
<dbReference type="NCBIfam" id="TIGR01060">
    <property type="entry name" value="eno"/>
    <property type="match status" value="1"/>
</dbReference>
<dbReference type="PANTHER" id="PTHR11902">
    <property type="entry name" value="ENOLASE"/>
    <property type="match status" value="1"/>
</dbReference>
<dbReference type="PANTHER" id="PTHR11902:SF1">
    <property type="entry name" value="ENOLASE"/>
    <property type="match status" value="1"/>
</dbReference>
<dbReference type="Pfam" id="PF00113">
    <property type="entry name" value="Enolase_C"/>
    <property type="match status" value="1"/>
</dbReference>
<dbReference type="Pfam" id="PF03952">
    <property type="entry name" value="Enolase_N"/>
    <property type="match status" value="1"/>
</dbReference>
<dbReference type="PIRSF" id="PIRSF001400">
    <property type="entry name" value="Enolase"/>
    <property type="match status" value="1"/>
</dbReference>
<dbReference type="PRINTS" id="PR00148">
    <property type="entry name" value="ENOLASE"/>
</dbReference>
<dbReference type="SFLD" id="SFLDS00001">
    <property type="entry name" value="Enolase"/>
    <property type="match status" value="1"/>
</dbReference>
<dbReference type="SFLD" id="SFLDF00002">
    <property type="entry name" value="enolase"/>
    <property type="match status" value="1"/>
</dbReference>
<dbReference type="SMART" id="SM01192">
    <property type="entry name" value="Enolase_C"/>
    <property type="match status" value="1"/>
</dbReference>
<dbReference type="SMART" id="SM01193">
    <property type="entry name" value="Enolase_N"/>
    <property type="match status" value="1"/>
</dbReference>
<dbReference type="SUPFAM" id="SSF51604">
    <property type="entry name" value="Enolase C-terminal domain-like"/>
    <property type="match status" value="1"/>
</dbReference>
<dbReference type="SUPFAM" id="SSF54826">
    <property type="entry name" value="Enolase N-terminal domain-like"/>
    <property type="match status" value="1"/>
</dbReference>
<dbReference type="PROSITE" id="PS00164">
    <property type="entry name" value="ENOLASE"/>
    <property type="match status" value="1"/>
</dbReference>
<feature type="chain" id="PRO_1000132997" description="Enolase">
    <location>
        <begin position="1"/>
        <end position="425"/>
    </location>
</feature>
<feature type="active site" description="Proton donor" evidence="1">
    <location>
        <position position="204"/>
    </location>
</feature>
<feature type="active site" description="Proton acceptor" evidence="1">
    <location>
        <position position="334"/>
    </location>
</feature>
<feature type="binding site" evidence="1">
    <location>
        <position position="162"/>
    </location>
    <ligand>
        <name>(2R)-2-phosphoglycerate</name>
        <dbReference type="ChEBI" id="CHEBI:58289"/>
    </ligand>
</feature>
<feature type="binding site" evidence="1">
    <location>
        <position position="241"/>
    </location>
    <ligand>
        <name>Mg(2+)</name>
        <dbReference type="ChEBI" id="CHEBI:18420"/>
    </ligand>
</feature>
<feature type="binding site" evidence="1">
    <location>
        <position position="282"/>
    </location>
    <ligand>
        <name>Mg(2+)</name>
        <dbReference type="ChEBI" id="CHEBI:18420"/>
    </ligand>
</feature>
<feature type="binding site" evidence="1">
    <location>
        <position position="309"/>
    </location>
    <ligand>
        <name>Mg(2+)</name>
        <dbReference type="ChEBI" id="CHEBI:18420"/>
    </ligand>
</feature>
<feature type="binding site" evidence="1">
    <location>
        <position position="334"/>
    </location>
    <ligand>
        <name>(2R)-2-phosphoglycerate</name>
        <dbReference type="ChEBI" id="CHEBI:58289"/>
    </ligand>
</feature>
<feature type="binding site" evidence="1">
    <location>
        <position position="363"/>
    </location>
    <ligand>
        <name>(2R)-2-phosphoglycerate</name>
        <dbReference type="ChEBI" id="CHEBI:58289"/>
    </ligand>
</feature>
<feature type="binding site" evidence="1">
    <location>
        <position position="364"/>
    </location>
    <ligand>
        <name>(2R)-2-phosphoglycerate</name>
        <dbReference type="ChEBI" id="CHEBI:58289"/>
    </ligand>
</feature>
<feature type="binding site" evidence="1">
    <location>
        <position position="385"/>
    </location>
    <ligand>
        <name>(2R)-2-phosphoglycerate</name>
        <dbReference type="ChEBI" id="CHEBI:58289"/>
    </ligand>
</feature>
<gene>
    <name evidence="1" type="primary">eno</name>
    <name type="ordered locus">cauri_0914</name>
</gene>
<proteinExistence type="inferred from homology"/>
<sequence>MADIIHVMAREILDSRGNPTVEAEVFLDDGARGVAGVPSGASTGVHEAHELRDGGDRYLGKGVLKAVENVNEEIADELAGFEADDQRLIDQALIKLDGTENKSRLGANAILGVSIAAAKAAAESAGLPLYRYVGGPNAHVLPVPMMNIVNGGAHADSGVDVQEFMIAPIGAESFSEALRIGAEVYHALKSVIKSKGLSTGLGDEGGFAPEAESTKAALDLIIEAIKKAGFEPGKDVALALDVASSEFFKDGKYHFEGGEHTAEEMAKVYEELVAKYPIVSIEDPLQEDDWEGYTKLTETLGDKVQIVGDDFFVTNPARLQEGIDKKAANALLVKVNQIGTLTETFDAVELAHRNGYRTMMSHRSGETEDTTIADLAVALNCGQIKTGAPARSERVAKYNQLLRIEQELGDAAVYAGRSAFPRFQG</sequence>
<evidence type="ECO:0000255" key="1">
    <source>
        <dbReference type="HAMAP-Rule" id="MF_00318"/>
    </source>
</evidence>
<keyword id="KW-0963">Cytoplasm</keyword>
<keyword id="KW-0324">Glycolysis</keyword>
<keyword id="KW-0456">Lyase</keyword>
<keyword id="KW-0460">Magnesium</keyword>
<keyword id="KW-0479">Metal-binding</keyword>
<keyword id="KW-1185">Reference proteome</keyword>
<keyword id="KW-0964">Secreted</keyword>